<keyword id="KW-0021">Allosteric enzyme</keyword>
<keyword id="KW-0067">ATP-binding</keyword>
<keyword id="KW-0963">Cytoplasm</keyword>
<keyword id="KW-0324">Glycolysis</keyword>
<keyword id="KW-0418">Kinase</keyword>
<keyword id="KW-0460">Magnesium</keyword>
<keyword id="KW-0479">Metal-binding</keyword>
<keyword id="KW-0547">Nucleotide-binding</keyword>
<keyword id="KW-1185">Reference proteome</keyword>
<keyword id="KW-0808">Transferase</keyword>
<organism>
    <name type="scientific">Escherichia coli O45:K1 (strain S88 / ExPEC)</name>
    <dbReference type="NCBI Taxonomy" id="585035"/>
    <lineage>
        <taxon>Bacteria</taxon>
        <taxon>Pseudomonadati</taxon>
        <taxon>Pseudomonadota</taxon>
        <taxon>Gammaproteobacteria</taxon>
        <taxon>Enterobacterales</taxon>
        <taxon>Enterobacteriaceae</taxon>
        <taxon>Escherichia</taxon>
    </lineage>
</organism>
<evidence type="ECO:0000255" key="1">
    <source>
        <dbReference type="HAMAP-Rule" id="MF_00339"/>
    </source>
</evidence>
<comment type="function">
    <text evidence="1">Catalyzes the phosphorylation of D-fructose 6-phosphate to fructose 1,6-bisphosphate by ATP, the first committing step of glycolysis.</text>
</comment>
<comment type="catalytic activity">
    <reaction evidence="1">
        <text>beta-D-fructose 6-phosphate + ATP = beta-D-fructose 1,6-bisphosphate + ADP + H(+)</text>
        <dbReference type="Rhea" id="RHEA:16109"/>
        <dbReference type="ChEBI" id="CHEBI:15378"/>
        <dbReference type="ChEBI" id="CHEBI:30616"/>
        <dbReference type="ChEBI" id="CHEBI:32966"/>
        <dbReference type="ChEBI" id="CHEBI:57634"/>
        <dbReference type="ChEBI" id="CHEBI:456216"/>
        <dbReference type="EC" id="2.7.1.11"/>
    </reaction>
</comment>
<comment type="cofactor">
    <cofactor evidence="1">
        <name>Mg(2+)</name>
        <dbReference type="ChEBI" id="CHEBI:18420"/>
    </cofactor>
</comment>
<comment type="activity regulation">
    <text evidence="1">Allosterically activated by ADP and other diphosphonucleosides, and allosterically inhibited by phosphoenolpyruvate.</text>
</comment>
<comment type="pathway">
    <text evidence="1">Carbohydrate degradation; glycolysis; D-glyceraldehyde 3-phosphate and glycerone phosphate from D-glucose: step 3/4.</text>
</comment>
<comment type="subunit">
    <text evidence="1">Homotetramer.</text>
</comment>
<comment type="subcellular location">
    <subcellularLocation>
        <location evidence="1">Cytoplasm</location>
    </subcellularLocation>
</comment>
<comment type="similarity">
    <text evidence="1">Belongs to the phosphofructokinase type A (PFKA) family. ATP-dependent PFK group I subfamily. Prokaryotic clade 'B1' sub-subfamily.</text>
</comment>
<protein>
    <recommendedName>
        <fullName evidence="1">ATP-dependent 6-phosphofructokinase isozyme 1</fullName>
        <shortName evidence="1">ATP-PFK 1</shortName>
        <shortName evidence="1">Phosphofructokinase 1</shortName>
        <ecNumber evidence="1">2.7.1.11</ecNumber>
    </recommendedName>
    <alternativeName>
        <fullName>6-phosphofructokinase isozyme I</fullName>
    </alternativeName>
    <alternativeName>
        <fullName evidence="1">Phosphohexokinase 1</fullName>
    </alternativeName>
</protein>
<gene>
    <name evidence="1" type="primary">pfkA</name>
    <name type="ordered locus">ECS88_4366</name>
</gene>
<reference key="1">
    <citation type="journal article" date="2009" name="PLoS Genet.">
        <title>Organised genome dynamics in the Escherichia coli species results in highly diverse adaptive paths.</title>
        <authorList>
            <person name="Touchon M."/>
            <person name="Hoede C."/>
            <person name="Tenaillon O."/>
            <person name="Barbe V."/>
            <person name="Baeriswyl S."/>
            <person name="Bidet P."/>
            <person name="Bingen E."/>
            <person name="Bonacorsi S."/>
            <person name="Bouchier C."/>
            <person name="Bouvet O."/>
            <person name="Calteau A."/>
            <person name="Chiapello H."/>
            <person name="Clermont O."/>
            <person name="Cruveiller S."/>
            <person name="Danchin A."/>
            <person name="Diard M."/>
            <person name="Dossat C."/>
            <person name="Karoui M.E."/>
            <person name="Frapy E."/>
            <person name="Garry L."/>
            <person name="Ghigo J.M."/>
            <person name="Gilles A.M."/>
            <person name="Johnson J."/>
            <person name="Le Bouguenec C."/>
            <person name="Lescat M."/>
            <person name="Mangenot S."/>
            <person name="Martinez-Jehanne V."/>
            <person name="Matic I."/>
            <person name="Nassif X."/>
            <person name="Oztas S."/>
            <person name="Petit M.A."/>
            <person name="Pichon C."/>
            <person name="Rouy Z."/>
            <person name="Ruf C.S."/>
            <person name="Schneider D."/>
            <person name="Tourret J."/>
            <person name="Vacherie B."/>
            <person name="Vallenet D."/>
            <person name="Medigue C."/>
            <person name="Rocha E.P.C."/>
            <person name="Denamur E."/>
        </authorList>
    </citation>
    <scope>NUCLEOTIDE SEQUENCE [LARGE SCALE GENOMIC DNA]</scope>
    <source>
        <strain>S88 / ExPEC</strain>
    </source>
</reference>
<name>PFKA_ECO45</name>
<accession>B7MI48</accession>
<sequence length="320" mass="34842">MIKKIGVLTSGGDAPGMNAAIRGVVRSALTEGLEVMGIYDGYLGLYEDRMVQLDRYSVSDMINRGGTFLGSARFPEFRDENIRAVAIENLKKRGIDALVVIGGDGSYMGAMRLTEMGFPCIGLPGTIDNDIKGTDYTIGFFTALSTVVEAIDRLRDTSSSHQRISVVEVMGRYCGDLTLAAAIAGGCEFVVVPEVEFSREDLVNEIKAGIAKGKKHAIVAITEHMCDVDELAHFIEKETGRETRATVLGHIQRGGSPVPYDRILASRMGAYAIDLLLAGYGGRCVGIQNEQLVHHDIIDAIENMKRPFKGDWLDCAKKLY</sequence>
<dbReference type="EC" id="2.7.1.11" evidence="1"/>
<dbReference type="EMBL" id="CU928161">
    <property type="protein sequence ID" value="CAR05546.1"/>
    <property type="molecule type" value="Genomic_DNA"/>
</dbReference>
<dbReference type="RefSeq" id="WP_000591795.1">
    <property type="nucleotide sequence ID" value="NC_011742.1"/>
</dbReference>
<dbReference type="SMR" id="B7MI48"/>
<dbReference type="GeneID" id="93777982"/>
<dbReference type="KEGG" id="ecz:ECS88_4366"/>
<dbReference type="HOGENOM" id="CLU_020655_0_1_6"/>
<dbReference type="UniPathway" id="UPA00109">
    <property type="reaction ID" value="UER00182"/>
</dbReference>
<dbReference type="Proteomes" id="UP000000747">
    <property type="component" value="Chromosome"/>
</dbReference>
<dbReference type="GO" id="GO:0005945">
    <property type="term" value="C:6-phosphofructokinase complex"/>
    <property type="evidence" value="ECO:0007669"/>
    <property type="project" value="TreeGrafter"/>
</dbReference>
<dbReference type="GO" id="GO:0003872">
    <property type="term" value="F:6-phosphofructokinase activity"/>
    <property type="evidence" value="ECO:0007669"/>
    <property type="project" value="UniProtKB-UniRule"/>
</dbReference>
<dbReference type="GO" id="GO:0016208">
    <property type="term" value="F:AMP binding"/>
    <property type="evidence" value="ECO:0007669"/>
    <property type="project" value="TreeGrafter"/>
</dbReference>
<dbReference type="GO" id="GO:0005524">
    <property type="term" value="F:ATP binding"/>
    <property type="evidence" value="ECO:0007669"/>
    <property type="project" value="UniProtKB-KW"/>
</dbReference>
<dbReference type="GO" id="GO:0070095">
    <property type="term" value="F:fructose-6-phosphate binding"/>
    <property type="evidence" value="ECO:0007669"/>
    <property type="project" value="TreeGrafter"/>
</dbReference>
<dbReference type="GO" id="GO:0042802">
    <property type="term" value="F:identical protein binding"/>
    <property type="evidence" value="ECO:0007669"/>
    <property type="project" value="TreeGrafter"/>
</dbReference>
<dbReference type="GO" id="GO:0046872">
    <property type="term" value="F:metal ion binding"/>
    <property type="evidence" value="ECO:0007669"/>
    <property type="project" value="UniProtKB-KW"/>
</dbReference>
<dbReference type="GO" id="GO:0048029">
    <property type="term" value="F:monosaccharide binding"/>
    <property type="evidence" value="ECO:0007669"/>
    <property type="project" value="TreeGrafter"/>
</dbReference>
<dbReference type="GO" id="GO:0061621">
    <property type="term" value="P:canonical glycolysis"/>
    <property type="evidence" value="ECO:0007669"/>
    <property type="project" value="TreeGrafter"/>
</dbReference>
<dbReference type="GO" id="GO:0030388">
    <property type="term" value="P:fructose 1,6-bisphosphate metabolic process"/>
    <property type="evidence" value="ECO:0007669"/>
    <property type="project" value="TreeGrafter"/>
</dbReference>
<dbReference type="GO" id="GO:0006002">
    <property type="term" value="P:fructose 6-phosphate metabolic process"/>
    <property type="evidence" value="ECO:0007669"/>
    <property type="project" value="InterPro"/>
</dbReference>
<dbReference type="CDD" id="cd00763">
    <property type="entry name" value="Bacterial_PFK"/>
    <property type="match status" value="1"/>
</dbReference>
<dbReference type="FunFam" id="3.40.50.450:FF:000001">
    <property type="entry name" value="ATP-dependent 6-phosphofructokinase"/>
    <property type="match status" value="1"/>
</dbReference>
<dbReference type="FunFam" id="3.40.50.460:FF:000002">
    <property type="entry name" value="ATP-dependent 6-phosphofructokinase"/>
    <property type="match status" value="1"/>
</dbReference>
<dbReference type="Gene3D" id="3.40.50.450">
    <property type="match status" value="1"/>
</dbReference>
<dbReference type="Gene3D" id="3.40.50.460">
    <property type="entry name" value="Phosphofructokinase domain"/>
    <property type="match status" value="1"/>
</dbReference>
<dbReference type="HAMAP" id="MF_00339">
    <property type="entry name" value="Phosphofructokinase_I_B1"/>
    <property type="match status" value="1"/>
</dbReference>
<dbReference type="InterPro" id="IPR022953">
    <property type="entry name" value="ATP_PFK"/>
</dbReference>
<dbReference type="InterPro" id="IPR012003">
    <property type="entry name" value="ATP_PFK_prok-type"/>
</dbReference>
<dbReference type="InterPro" id="IPR012828">
    <property type="entry name" value="PFKA_ATP_prok"/>
</dbReference>
<dbReference type="InterPro" id="IPR015912">
    <property type="entry name" value="Phosphofructokinase_CS"/>
</dbReference>
<dbReference type="InterPro" id="IPR000023">
    <property type="entry name" value="Phosphofructokinase_dom"/>
</dbReference>
<dbReference type="InterPro" id="IPR035966">
    <property type="entry name" value="PKF_sf"/>
</dbReference>
<dbReference type="NCBIfam" id="TIGR02482">
    <property type="entry name" value="PFKA_ATP"/>
    <property type="match status" value="1"/>
</dbReference>
<dbReference type="NCBIfam" id="NF002872">
    <property type="entry name" value="PRK03202.1"/>
    <property type="match status" value="1"/>
</dbReference>
<dbReference type="PANTHER" id="PTHR13697:SF4">
    <property type="entry name" value="ATP-DEPENDENT 6-PHOSPHOFRUCTOKINASE"/>
    <property type="match status" value="1"/>
</dbReference>
<dbReference type="PANTHER" id="PTHR13697">
    <property type="entry name" value="PHOSPHOFRUCTOKINASE"/>
    <property type="match status" value="1"/>
</dbReference>
<dbReference type="Pfam" id="PF00365">
    <property type="entry name" value="PFK"/>
    <property type="match status" value="1"/>
</dbReference>
<dbReference type="PIRSF" id="PIRSF000532">
    <property type="entry name" value="ATP_PFK_prok"/>
    <property type="match status" value="1"/>
</dbReference>
<dbReference type="PRINTS" id="PR00476">
    <property type="entry name" value="PHFRCTKINASE"/>
</dbReference>
<dbReference type="SUPFAM" id="SSF53784">
    <property type="entry name" value="Phosphofructokinase"/>
    <property type="match status" value="1"/>
</dbReference>
<dbReference type="PROSITE" id="PS00433">
    <property type="entry name" value="PHOSPHOFRUCTOKINASE"/>
    <property type="match status" value="1"/>
</dbReference>
<feature type="chain" id="PRO_1000120036" description="ATP-dependent 6-phosphofructokinase isozyme 1">
    <location>
        <begin position="1"/>
        <end position="320"/>
    </location>
</feature>
<feature type="active site" description="Proton acceptor" evidence="1">
    <location>
        <position position="128"/>
    </location>
</feature>
<feature type="binding site" evidence="1">
    <location>
        <position position="12"/>
    </location>
    <ligand>
        <name>ATP</name>
        <dbReference type="ChEBI" id="CHEBI:30616"/>
    </ligand>
</feature>
<feature type="binding site" evidence="1">
    <location>
        <begin position="22"/>
        <end position="26"/>
    </location>
    <ligand>
        <name>ADP</name>
        <dbReference type="ChEBI" id="CHEBI:456216"/>
        <note>allosteric activator; ligand shared between dimeric partners</note>
    </ligand>
</feature>
<feature type="binding site" evidence="1">
    <location>
        <begin position="55"/>
        <end position="60"/>
    </location>
    <ligand>
        <name>ADP</name>
        <dbReference type="ChEBI" id="CHEBI:456216"/>
        <note>allosteric activator; ligand shared between dimeric partners</note>
    </ligand>
</feature>
<feature type="binding site" evidence="1">
    <location>
        <begin position="73"/>
        <end position="74"/>
    </location>
    <ligand>
        <name>ATP</name>
        <dbReference type="ChEBI" id="CHEBI:30616"/>
    </ligand>
</feature>
<feature type="binding site" evidence="1">
    <location>
        <begin position="103"/>
        <end position="106"/>
    </location>
    <ligand>
        <name>ATP</name>
        <dbReference type="ChEBI" id="CHEBI:30616"/>
    </ligand>
</feature>
<feature type="binding site" evidence="1">
    <location>
        <position position="104"/>
    </location>
    <ligand>
        <name>Mg(2+)</name>
        <dbReference type="ChEBI" id="CHEBI:18420"/>
        <note>catalytic</note>
    </ligand>
</feature>
<feature type="binding site" description="in other chain" evidence="1">
    <location>
        <begin position="126"/>
        <end position="128"/>
    </location>
    <ligand>
        <name>substrate</name>
        <note>ligand shared between dimeric partners</note>
    </ligand>
</feature>
<feature type="binding site" description="in other chain" evidence="1">
    <location>
        <position position="155"/>
    </location>
    <ligand>
        <name>ADP</name>
        <dbReference type="ChEBI" id="CHEBI:456216"/>
        <note>allosteric activator; ligand shared between dimeric partners</note>
    </ligand>
</feature>
<feature type="binding site" evidence="1">
    <location>
        <position position="163"/>
    </location>
    <ligand>
        <name>substrate</name>
        <note>ligand shared between dimeric partners</note>
    </ligand>
</feature>
<feature type="binding site" description="in other chain" evidence="1">
    <location>
        <begin position="170"/>
        <end position="172"/>
    </location>
    <ligand>
        <name>substrate</name>
        <note>ligand shared between dimeric partners</note>
    </ligand>
</feature>
<feature type="binding site" description="in other chain" evidence="1">
    <location>
        <begin position="186"/>
        <end position="188"/>
    </location>
    <ligand>
        <name>ADP</name>
        <dbReference type="ChEBI" id="CHEBI:456216"/>
        <note>allosteric activator; ligand shared between dimeric partners</note>
    </ligand>
</feature>
<feature type="binding site" description="in other chain" evidence="1">
    <location>
        <position position="212"/>
    </location>
    <ligand>
        <name>ADP</name>
        <dbReference type="ChEBI" id="CHEBI:456216"/>
        <note>allosteric activator; ligand shared between dimeric partners</note>
    </ligand>
</feature>
<feature type="binding site" description="in other chain" evidence="1">
    <location>
        <begin position="214"/>
        <end position="216"/>
    </location>
    <ligand>
        <name>ADP</name>
        <dbReference type="ChEBI" id="CHEBI:456216"/>
        <note>allosteric activator; ligand shared between dimeric partners</note>
    </ligand>
</feature>
<feature type="binding site" description="in other chain" evidence="1">
    <location>
        <position position="223"/>
    </location>
    <ligand>
        <name>substrate</name>
        <note>ligand shared between dimeric partners</note>
    </ligand>
</feature>
<feature type="binding site" evidence="1">
    <location>
        <position position="244"/>
    </location>
    <ligand>
        <name>substrate</name>
        <note>ligand shared between dimeric partners</note>
    </ligand>
</feature>
<feature type="binding site" description="in other chain" evidence="1">
    <location>
        <begin position="250"/>
        <end position="253"/>
    </location>
    <ligand>
        <name>substrate</name>
        <note>ligand shared between dimeric partners</note>
    </ligand>
</feature>
<proteinExistence type="inferred from homology"/>